<keyword id="KW-1003">Cell membrane</keyword>
<keyword id="KW-0238">DNA-binding</keyword>
<keyword id="KW-0413">Isomerase</keyword>
<keyword id="KW-0472">Membrane</keyword>
<keyword id="KW-0799">Topoisomerase</keyword>
<gene>
    <name evidence="1" type="primary">parC</name>
    <name type="ordered locus">SA1189</name>
</gene>
<dbReference type="EC" id="5.6.2.2" evidence="1"/>
<dbReference type="EMBL" id="BA000018">
    <property type="protein sequence ID" value="BAB42447.1"/>
    <property type="molecule type" value="Genomic_DNA"/>
</dbReference>
<dbReference type="PIR" id="C89911">
    <property type="entry name" value="C89911"/>
</dbReference>
<dbReference type="RefSeq" id="WP_001289562.1">
    <property type="nucleotide sequence ID" value="NC_002745.2"/>
</dbReference>
<dbReference type="SMR" id="Q93KF4"/>
<dbReference type="EnsemblBacteria" id="BAB42447">
    <property type="protein sequence ID" value="BAB42447"/>
    <property type="gene ID" value="BAB42447"/>
</dbReference>
<dbReference type="KEGG" id="sau:SA1189"/>
<dbReference type="HOGENOM" id="CLU_002977_6_1_9"/>
<dbReference type="GO" id="GO:0005694">
    <property type="term" value="C:chromosome"/>
    <property type="evidence" value="ECO:0007669"/>
    <property type="project" value="InterPro"/>
</dbReference>
<dbReference type="GO" id="GO:0005737">
    <property type="term" value="C:cytoplasm"/>
    <property type="evidence" value="ECO:0007669"/>
    <property type="project" value="TreeGrafter"/>
</dbReference>
<dbReference type="GO" id="GO:0009330">
    <property type="term" value="C:DNA topoisomerase type II (double strand cut, ATP-hydrolyzing) complex"/>
    <property type="evidence" value="ECO:0007669"/>
    <property type="project" value="TreeGrafter"/>
</dbReference>
<dbReference type="GO" id="GO:0019897">
    <property type="term" value="C:extrinsic component of plasma membrane"/>
    <property type="evidence" value="ECO:0007669"/>
    <property type="project" value="UniProtKB-UniRule"/>
</dbReference>
<dbReference type="GO" id="GO:0005524">
    <property type="term" value="F:ATP binding"/>
    <property type="evidence" value="ECO:0007669"/>
    <property type="project" value="InterPro"/>
</dbReference>
<dbReference type="GO" id="GO:0003677">
    <property type="term" value="F:DNA binding"/>
    <property type="evidence" value="ECO:0007669"/>
    <property type="project" value="UniProtKB-UniRule"/>
</dbReference>
<dbReference type="GO" id="GO:0034335">
    <property type="term" value="F:DNA negative supercoiling activity"/>
    <property type="evidence" value="ECO:0007669"/>
    <property type="project" value="UniProtKB-ARBA"/>
</dbReference>
<dbReference type="GO" id="GO:0007059">
    <property type="term" value="P:chromosome segregation"/>
    <property type="evidence" value="ECO:0007669"/>
    <property type="project" value="UniProtKB-UniRule"/>
</dbReference>
<dbReference type="GO" id="GO:0006265">
    <property type="term" value="P:DNA topological change"/>
    <property type="evidence" value="ECO:0007669"/>
    <property type="project" value="UniProtKB-UniRule"/>
</dbReference>
<dbReference type="CDD" id="cd00187">
    <property type="entry name" value="TOP4c"/>
    <property type="match status" value="1"/>
</dbReference>
<dbReference type="FunFam" id="1.10.268.10:FF:000001">
    <property type="entry name" value="DNA gyrase subunit A"/>
    <property type="match status" value="1"/>
</dbReference>
<dbReference type="FunFam" id="3.30.1360.40:FF:000002">
    <property type="entry name" value="DNA gyrase subunit A"/>
    <property type="match status" value="1"/>
</dbReference>
<dbReference type="FunFam" id="3.90.199.10:FF:000001">
    <property type="entry name" value="DNA gyrase subunit A"/>
    <property type="match status" value="1"/>
</dbReference>
<dbReference type="FunFam" id="2.120.10.90:FF:000005">
    <property type="entry name" value="DNA topoisomerase 4 subunit A"/>
    <property type="match status" value="1"/>
</dbReference>
<dbReference type="Gene3D" id="3.30.1360.40">
    <property type="match status" value="1"/>
</dbReference>
<dbReference type="Gene3D" id="2.120.10.90">
    <property type="entry name" value="DNA gyrase/topoisomerase IV, subunit A, C-terminal"/>
    <property type="match status" value="1"/>
</dbReference>
<dbReference type="Gene3D" id="3.90.199.10">
    <property type="entry name" value="Topoisomerase II, domain 5"/>
    <property type="match status" value="1"/>
</dbReference>
<dbReference type="Gene3D" id="1.10.268.10">
    <property type="entry name" value="Topoisomerase, domain 3"/>
    <property type="match status" value="1"/>
</dbReference>
<dbReference type="HAMAP" id="MF_00937">
    <property type="entry name" value="ParC_type2"/>
    <property type="match status" value="1"/>
</dbReference>
<dbReference type="InterPro" id="IPR006691">
    <property type="entry name" value="GyrA/parC_rep"/>
</dbReference>
<dbReference type="InterPro" id="IPR035516">
    <property type="entry name" value="Gyrase/topoIV_suA_C"/>
</dbReference>
<dbReference type="InterPro" id="IPR013760">
    <property type="entry name" value="Topo_IIA-like_dom_sf"/>
</dbReference>
<dbReference type="InterPro" id="IPR013758">
    <property type="entry name" value="Topo_IIA_A/C_ab"/>
</dbReference>
<dbReference type="InterPro" id="IPR013757">
    <property type="entry name" value="Topo_IIA_A_a_sf"/>
</dbReference>
<dbReference type="InterPro" id="IPR002205">
    <property type="entry name" value="Topo_IIA_dom_A"/>
</dbReference>
<dbReference type="InterPro" id="IPR005741">
    <property type="entry name" value="TopoIV_A_Gpos"/>
</dbReference>
<dbReference type="InterPro" id="IPR050220">
    <property type="entry name" value="Type_II_DNA_Topoisomerases"/>
</dbReference>
<dbReference type="NCBIfam" id="TIGR01061">
    <property type="entry name" value="parC_Gpos"/>
    <property type="match status" value="1"/>
</dbReference>
<dbReference type="NCBIfam" id="NF004044">
    <property type="entry name" value="PRK05561.1"/>
    <property type="match status" value="1"/>
</dbReference>
<dbReference type="PANTHER" id="PTHR43493">
    <property type="entry name" value="DNA GYRASE/TOPOISOMERASE SUBUNIT A"/>
    <property type="match status" value="1"/>
</dbReference>
<dbReference type="PANTHER" id="PTHR43493:SF9">
    <property type="entry name" value="DNA TOPOISOMERASE 4 SUBUNIT A"/>
    <property type="match status" value="1"/>
</dbReference>
<dbReference type="Pfam" id="PF03989">
    <property type="entry name" value="DNA_gyraseA_C"/>
    <property type="match status" value="5"/>
</dbReference>
<dbReference type="Pfam" id="PF00521">
    <property type="entry name" value="DNA_topoisoIV"/>
    <property type="match status" value="1"/>
</dbReference>
<dbReference type="SMART" id="SM00434">
    <property type="entry name" value="TOP4c"/>
    <property type="match status" value="1"/>
</dbReference>
<dbReference type="SUPFAM" id="SSF101904">
    <property type="entry name" value="GyrA/ParC C-terminal domain-like"/>
    <property type="match status" value="1"/>
</dbReference>
<dbReference type="SUPFAM" id="SSF56719">
    <property type="entry name" value="Type II DNA topoisomerase"/>
    <property type="match status" value="1"/>
</dbReference>
<dbReference type="PROSITE" id="PS52040">
    <property type="entry name" value="TOPO_IIA"/>
    <property type="match status" value="1"/>
</dbReference>
<reference key="1">
    <citation type="journal article" date="2001" name="Lancet">
        <title>Whole genome sequencing of meticillin-resistant Staphylococcus aureus.</title>
        <authorList>
            <person name="Kuroda M."/>
            <person name="Ohta T."/>
            <person name="Uchiyama I."/>
            <person name="Baba T."/>
            <person name="Yuzawa H."/>
            <person name="Kobayashi I."/>
            <person name="Cui L."/>
            <person name="Oguchi A."/>
            <person name="Aoki K."/>
            <person name="Nagai Y."/>
            <person name="Lian J.-Q."/>
            <person name="Ito T."/>
            <person name="Kanamori M."/>
            <person name="Matsumaru H."/>
            <person name="Maruyama A."/>
            <person name="Murakami H."/>
            <person name="Hosoyama A."/>
            <person name="Mizutani-Ui Y."/>
            <person name="Takahashi N.K."/>
            <person name="Sawano T."/>
            <person name="Inoue R."/>
            <person name="Kaito C."/>
            <person name="Sekimizu K."/>
            <person name="Hirakawa H."/>
            <person name="Kuhara S."/>
            <person name="Goto S."/>
            <person name="Yabuzaki J."/>
            <person name="Kanehisa M."/>
            <person name="Yamashita A."/>
            <person name="Oshima K."/>
            <person name="Furuya K."/>
            <person name="Yoshino C."/>
            <person name="Shiba T."/>
            <person name="Hattori M."/>
            <person name="Ogasawara N."/>
            <person name="Hayashi H."/>
            <person name="Hiramatsu K."/>
        </authorList>
    </citation>
    <scope>NUCLEOTIDE SEQUENCE [LARGE SCALE GENOMIC DNA]</scope>
    <source>
        <strain>N315</strain>
    </source>
</reference>
<reference key="2">
    <citation type="submission" date="2007-10" db="UniProtKB">
        <title>Shotgun proteomic analysis of total and membrane protein extracts of S. aureus strain N315.</title>
        <authorList>
            <person name="Vaezzadeh A.R."/>
            <person name="Deshusses J."/>
            <person name="Lescuyer P."/>
            <person name="Hochstrasser D.F."/>
        </authorList>
    </citation>
    <scope>IDENTIFICATION BY MASS SPECTROMETRY [LARGE SCALE ANALYSIS]</scope>
    <source>
        <strain>N315</strain>
    </source>
</reference>
<evidence type="ECO:0000255" key="1">
    <source>
        <dbReference type="HAMAP-Rule" id="MF_00937"/>
    </source>
</evidence>
<evidence type="ECO:0000255" key="2">
    <source>
        <dbReference type="PROSITE-ProRule" id="PRU01384"/>
    </source>
</evidence>
<proteinExistence type="evidence at protein level"/>
<protein>
    <recommendedName>
        <fullName evidence="1">DNA topoisomerase 4 subunit A</fullName>
        <ecNumber evidence="1">5.6.2.2</ecNumber>
    </recommendedName>
    <alternativeName>
        <fullName evidence="1">Topoisomerase IV subunit A</fullName>
    </alternativeName>
</protein>
<accession>Q93KF4</accession>
<sequence>MSEIIQDLSLEDVLGDRFGRYSKYIIQERALPDVRDGLKPVQRRILYAMYSSGNTHDKNFRKSAKTVGDVIGQYHPHGDSSVYEAMVRLSQDWKLRHVLIEMHGNNGSIDNDPPAAMRYTEAKLSLLAEELLRDINKETVSFIPNYDDTTLEPMVLPSRFPNLLVNGSTGISAGYATDIPPHNLAEVIQATLKYIDNPDITVNQLMKYIKGPDFPTGGIIQGIDGIKKAYESGKGRIIVRSKVEEETLRNGRKQLIITEIPYEVNKSSLVKRIDELRADKKVDGIVEVRDETDRTGLRIAIELKKDVNSESIKNYLYKNSDLQISYNFNMVAISDGRPKLMGIRQIIDSYLNHQIEVVANRTKFELDNAEKRMHIVEGLIKALSILDKVIELIRSSKNKRDAKENLIEVFEFTEEQAEAIVMLQLYRLTNTDIVALEGEHKELEALIKQLRHILDNHDALLNVIKEELNEIKKKFKSERLSLIEAEIEEIKIDKEVMVPSEEVILSMTRHGYIKRTSIRSFNASGVEDIGLKDGDSLLKHQEVNTQDTVLVFTNKGRYLFIPVHKLADIRWKELGQHVSQIVPIEEDEVVINVFNEKDFNTDAFYVFATQNGMIKKSTVPLFKTTRFNKPLIATKVKENDDLISVMRFEKDQLITVITNKGMSLTYNTSELSDTGLRAAGVKSINLKAEDFVVMTEGVSENDTILMATQRGSLKRISFKILQVAKRAQRGITLLKELKKNPHRIVAAHVVTGEHSQYTLYSKSNEEHGLINDIHKSEQYTNGSFIVDTDDFGEVIDMYIS</sequence>
<comment type="function">
    <text evidence="1">Topoisomerase IV is essential for chromosome segregation. It relaxes supercoiled DNA. Performs the decatenation events required during the replication of a circular DNA molecule.</text>
</comment>
<comment type="catalytic activity">
    <reaction evidence="1">
        <text>ATP-dependent breakage, passage and rejoining of double-stranded DNA.</text>
        <dbReference type="EC" id="5.6.2.2"/>
    </reaction>
</comment>
<comment type="subunit">
    <text evidence="1">Heterotetramer composed of ParC and ParE.</text>
</comment>
<comment type="subcellular location">
    <subcellularLocation>
        <location evidence="1">Cell membrane</location>
        <topology evidence="1">Peripheral membrane protein</topology>
    </subcellularLocation>
</comment>
<comment type="similarity">
    <text evidence="1">Belongs to the type II topoisomerase GyrA/ParC subunit family. ParC type 2 subfamily.</text>
</comment>
<organism>
    <name type="scientific">Staphylococcus aureus (strain N315)</name>
    <dbReference type="NCBI Taxonomy" id="158879"/>
    <lineage>
        <taxon>Bacteria</taxon>
        <taxon>Bacillati</taxon>
        <taxon>Bacillota</taxon>
        <taxon>Bacilli</taxon>
        <taxon>Bacillales</taxon>
        <taxon>Staphylococcaceae</taxon>
        <taxon>Staphylococcus</taxon>
    </lineage>
</organism>
<feature type="chain" id="PRO_0000145411" description="DNA topoisomerase 4 subunit A">
    <location>
        <begin position="1"/>
        <end position="800"/>
    </location>
</feature>
<feature type="domain" description="Topo IIA-type catalytic" evidence="2">
    <location>
        <begin position="31"/>
        <end position="495"/>
    </location>
</feature>
<feature type="active site" description="O-(5'-phospho-DNA)-tyrosine intermediate" evidence="1">
    <location>
        <position position="119"/>
    </location>
</feature>
<feature type="site" description="Interaction with DNA" evidence="1">
    <location>
        <position position="39"/>
    </location>
</feature>
<feature type="site" description="Interaction with DNA" evidence="1">
    <location>
        <position position="75"/>
    </location>
</feature>
<feature type="site" description="Interaction with DNA" evidence="1">
    <location>
        <position position="77"/>
    </location>
</feature>
<feature type="site" description="Interaction with DNA" evidence="1">
    <location>
        <position position="88"/>
    </location>
</feature>
<feature type="site" description="Interaction with DNA" evidence="1">
    <location>
        <position position="94"/>
    </location>
</feature>
<feature type="site" description="Transition state stabilizer" evidence="1">
    <location>
        <position position="118"/>
    </location>
</feature>
<name>PARC_STAAN</name>